<accession>Q67591</accession>
<comment type="function">
    <text evidence="1">Implicated in enhancement of V-sense gene expression. Acts a an inhibitor of C-sense gene transcription (By similarity).</text>
</comment>
<comment type="subunit">
    <text evidence="1">Homooligomer. Part of the C- and V-complexes which are RepA-Rep-DNA complexes involved in the c-sense and v-sense transcription (By similarity).</text>
</comment>
<comment type="subcellular location">
    <subcellularLocation>
        <location evidence="1">Host nucleus</location>
    </subcellularLocation>
    <subcellularLocation>
        <location evidence="1">Host cytoplasm</location>
    </subcellularLocation>
</comment>
<comment type="alternative products">
    <event type="alternative splicing"/>
    <isoform>
        <id>Q67591-1</id>
        <name>RepA</name>
        <sequence type="displayed"/>
    </isoform>
    <isoform>
        <id>Q67590-1</id>
        <name>Rep</name>
        <sequence type="external"/>
    </isoform>
</comment>
<comment type="domain">
    <text>There are 3 rolling circle replication (RCR) motifs. RCR-2 may be involved in metal coordination. RCR-3 is required for phosphodiester bond cleavage for initiation of RCR.</text>
</comment>
<comment type="miscellaneous">
    <molecule>Isoform RepA</molecule>
    <text>Produced from the unspliced transcript.</text>
</comment>
<comment type="similarity">
    <text evidence="5">Belongs to the geminiviridae Rep protein family.</text>
</comment>
<proteinExistence type="inferred from homology"/>
<reference key="1">
    <citation type="journal article" date="1991" name="J. Gen. Virol.">
        <title>The nucleotide sequence and genome structure of the geminivirus miscanthus streak virus.</title>
        <authorList>
            <person name="Chatani M."/>
            <person name="Matsumoto Y."/>
            <person name="Mizuta H."/>
            <person name="Ikegami M."/>
            <person name="Boulton M.I."/>
            <person name="Davies J.W."/>
        </authorList>
    </citation>
    <scope>NUCLEOTIDE SEQUENCE [GENOMIC DNA]</scope>
</reference>
<organismHost>
    <name type="scientific">Miscanthus sacchariflorus</name>
    <dbReference type="NCBI Taxonomy" id="183675"/>
</organismHost>
<keyword id="KW-0010">Activator</keyword>
<keyword id="KW-0025">Alternative splicing</keyword>
<keyword id="KW-0190">Covalent protein-DNA linkage</keyword>
<keyword id="KW-0235">DNA replication</keyword>
<keyword id="KW-0238">DNA-binding</keyword>
<keyword id="KW-0255">Endonuclease</keyword>
<keyword id="KW-1078">G1/S host cell cycle checkpoint dysregulation by virus</keyword>
<keyword id="KW-1035">Host cytoplasm</keyword>
<keyword id="KW-1048">Host nucleus</keyword>
<keyword id="KW-0945">Host-virus interaction</keyword>
<keyword id="KW-0378">Hydrolase</keyword>
<keyword id="KW-0479">Metal-binding</keyword>
<keyword id="KW-1121">Modulation of host cell cycle by virus</keyword>
<keyword id="KW-0540">Nuclease</keyword>
<keyword id="KW-0547">Nucleotide-binding</keyword>
<keyword id="KW-0548">Nucleotidyltransferase</keyword>
<keyword id="KW-1185">Reference proteome</keyword>
<keyword id="KW-0678">Repressor</keyword>
<keyword id="KW-0808">Transferase</keyword>
<organism>
    <name type="scientific">Miscanthus streak virus (isolate 91)</name>
    <name type="common">MiSV</name>
    <dbReference type="NCBI Taxonomy" id="268776"/>
    <lineage>
        <taxon>Viruses</taxon>
        <taxon>Monodnaviria</taxon>
        <taxon>Shotokuvirae</taxon>
        <taxon>Cressdnaviricota</taxon>
        <taxon>Repensiviricetes</taxon>
        <taxon>Geplafuvirales</taxon>
        <taxon>Geminiviridae</taxon>
        <taxon>Mastrevirus</taxon>
        <taxon>Miscanthus streak virus</taxon>
    </lineage>
</organism>
<gene>
    <name type="ORF">C1</name>
</gene>
<sequence length="217" mass="25050">MRAPASSAASNRPGPSNHPTPRWNSKQFFLTYPHCNLTPSELMKELFSRLTEKIPGYIKVSQEFHKDGDPHLHVLIQLNTKLCTRNPKFFDVQGFHPNIQPVRDAEKVFGYISKTNGDSDEMGELQLRIKKPEKPTRDQRMAMIIASSTNRNEYLSMVRKEFPFDWAIRLQQFEYSAAALFTEPPPVYQSPFPNEQIVCPPELVDIIDQEWNQVTTD</sequence>
<evidence type="ECO:0000250" key="1"/>
<evidence type="ECO:0000255" key="2"/>
<evidence type="ECO:0000255" key="3">
    <source>
        <dbReference type="PROSITE-ProRule" id="PRU01364"/>
    </source>
</evidence>
<evidence type="ECO:0000256" key="4">
    <source>
        <dbReference type="SAM" id="MobiDB-lite"/>
    </source>
</evidence>
<evidence type="ECO:0000305" key="5"/>
<dbReference type="EC" id="3.1.21.-"/>
<dbReference type="EMBL" id="D01030">
    <property type="protein sequence ID" value="BAA00835.1"/>
    <property type="molecule type" value="Genomic_DNA"/>
</dbReference>
<dbReference type="PIR" id="JQ1358">
    <property type="entry name" value="JQ1358"/>
</dbReference>
<dbReference type="RefSeq" id="NP_569147.1">
    <molecule id="Q67591-1"/>
    <property type="nucleotide sequence ID" value="NC_003379.1"/>
</dbReference>
<dbReference type="SMR" id="Q67591"/>
<dbReference type="KEGG" id="vg:932215"/>
<dbReference type="OrthoDB" id="9195at10239"/>
<dbReference type="Proteomes" id="UP000008874">
    <property type="component" value="Genome"/>
</dbReference>
<dbReference type="GO" id="GO:0030430">
    <property type="term" value="C:host cell cytoplasm"/>
    <property type="evidence" value="ECO:0007669"/>
    <property type="project" value="UniProtKB-SubCell"/>
</dbReference>
<dbReference type="GO" id="GO:0042025">
    <property type="term" value="C:host cell nucleus"/>
    <property type="evidence" value="ECO:0007669"/>
    <property type="project" value="UniProtKB-SubCell"/>
</dbReference>
<dbReference type="GO" id="GO:0003677">
    <property type="term" value="F:DNA binding"/>
    <property type="evidence" value="ECO:0007669"/>
    <property type="project" value="UniProtKB-KW"/>
</dbReference>
<dbReference type="GO" id="GO:0016888">
    <property type="term" value="F:endodeoxyribonuclease activity, producing 5'-phosphomonoesters"/>
    <property type="evidence" value="ECO:0007669"/>
    <property type="project" value="InterPro"/>
</dbReference>
<dbReference type="GO" id="GO:0046872">
    <property type="term" value="F:metal ion binding"/>
    <property type="evidence" value="ECO:0007669"/>
    <property type="project" value="UniProtKB-KW"/>
</dbReference>
<dbReference type="GO" id="GO:0000166">
    <property type="term" value="F:nucleotide binding"/>
    <property type="evidence" value="ECO:0007669"/>
    <property type="project" value="UniProtKB-KW"/>
</dbReference>
<dbReference type="GO" id="GO:0016779">
    <property type="term" value="F:nucleotidyltransferase activity"/>
    <property type="evidence" value="ECO:0007669"/>
    <property type="project" value="UniProtKB-KW"/>
</dbReference>
<dbReference type="GO" id="GO:0005198">
    <property type="term" value="F:structural molecule activity"/>
    <property type="evidence" value="ECO:0007669"/>
    <property type="project" value="InterPro"/>
</dbReference>
<dbReference type="GO" id="GO:0006260">
    <property type="term" value="P:DNA replication"/>
    <property type="evidence" value="ECO:0007669"/>
    <property type="project" value="UniProtKB-KW"/>
</dbReference>
<dbReference type="GO" id="GO:0039645">
    <property type="term" value="P:symbiont-mediated perturbation of host cell cycle G1/S transition checkpoint"/>
    <property type="evidence" value="ECO:0007669"/>
    <property type="project" value="UniProtKB-KW"/>
</dbReference>
<dbReference type="Gene3D" id="3.40.1310.20">
    <property type="match status" value="1"/>
</dbReference>
<dbReference type="InterPro" id="IPR049912">
    <property type="entry name" value="CRESS_DNA_REP"/>
</dbReference>
<dbReference type="InterPro" id="IPR001301">
    <property type="entry name" value="Gemini_AL1_CLV"/>
</dbReference>
<dbReference type="InterPro" id="IPR001191">
    <property type="entry name" value="Gemini_AL1_REP"/>
</dbReference>
<dbReference type="InterPro" id="IPR022692">
    <property type="entry name" value="Gemini_AL1_REP_central"/>
</dbReference>
<dbReference type="Pfam" id="PF00799">
    <property type="entry name" value="Gemini_AL1"/>
    <property type="match status" value="1"/>
</dbReference>
<dbReference type="Pfam" id="PF08283">
    <property type="entry name" value="Gemini_AL1_M"/>
    <property type="match status" value="1"/>
</dbReference>
<dbReference type="PRINTS" id="PR00227">
    <property type="entry name" value="GEMCOATAL1"/>
</dbReference>
<dbReference type="PRINTS" id="PR00228">
    <property type="entry name" value="GEMCOATCLVL1"/>
</dbReference>
<dbReference type="SUPFAM" id="SSF55464">
    <property type="entry name" value="Origin of replication-binding domain, RBD-like"/>
    <property type="match status" value="1"/>
</dbReference>
<dbReference type="PROSITE" id="PS52020">
    <property type="entry name" value="CRESS_DNA_REP"/>
    <property type="match status" value="1"/>
</dbReference>
<feature type="chain" id="PRO_0000316941" description="Replication-associated protein A">
    <location>
        <begin position="1"/>
        <end position="217"/>
    </location>
</feature>
<feature type="domain" description="CRESS-DNA virus Rep endonuclease" evidence="3">
    <location>
        <begin position="22"/>
        <end position="125"/>
    </location>
</feature>
<feature type="region of interest" description="Disordered" evidence="4">
    <location>
        <begin position="1"/>
        <end position="22"/>
    </location>
</feature>
<feature type="region of interest" description="Oligomerization" evidence="1">
    <location>
        <begin position="176"/>
        <end position="188"/>
    </location>
</feature>
<feature type="short sequence motif" description="RCR-1" evidence="3">
    <location>
        <begin position="29"/>
        <end position="32"/>
    </location>
</feature>
<feature type="short sequence motif" description="RCR-2" evidence="3">
    <location>
        <begin position="71"/>
        <end position="73"/>
    </location>
</feature>
<feature type="short sequence motif" description="RCR-3" evidence="3">
    <location>
        <begin position="111"/>
        <end position="114"/>
    </location>
</feature>
<feature type="compositionally biased region" description="Low complexity" evidence="4">
    <location>
        <begin position="1"/>
        <end position="17"/>
    </location>
</feature>
<feature type="active site" description="For DNA cleavage activity" evidence="3">
    <location>
        <position position="111"/>
    </location>
</feature>
<feature type="binding site" evidence="2">
    <location>
        <position position="63"/>
    </location>
    <ligand>
        <name>a divalent metal cation</name>
        <dbReference type="ChEBI" id="CHEBI:60240"/>
    </ligand>
</feature>
<feature type="binding site" evidence="2">
    <location>
        <position position="71"/>
    </location>
    <ligand>
        <name>a divalent metal cation</name>
        <dbReference type="ChEBI" id="CHEBI:60240"/>
    </ligand>
</feature>
<feature type="binding site" evidence="2">
    <location>
        <position position="73"/>
    </location>
    <ligand>
        <name>a divalent metal cation</name>
        <dbReference type="ChEBI" id="CHEBI:60240"/>
    </ligand>
</feature>
<name>REPA_MISV9</name>
<protein>
    <recommendedName>
        <fullName>Replication-associated protein A</fullName>
        <shortName>RepA</shortName>
        <ecNumber>3.1.21.-</ecNumber>
    </recommendedName>
</protein>